<protein>
    <recommendedName>
        <fullName evidence="1">Elongation factor G</fullName>
        <shortName evidence="1">EF-G</shortName>
    </recommendedName>
</protein>
<proteinExistence type="inferred from homology"/>
<evidence type="ECO:0000255" key="1">
    <source>
        <dbReference type="HAMAP-Rule" id="MF_00054"/>
    </source>
</evidence>
<gene>
    <name evidence="1" type="primary">fusA</name>
    <name type="ordered locus">Oant_1953</name>
</gene>
<reference key="1">
    <citation type="journal article" date="2011" name="J. Bacteriol.">
        <title>Genome of Ochrobactrum anthropi ATCC 49188 T, a versatile opportunistic pathogen and symbiont of several eukaryotic hosts.</title>
        <authorList>
            <person name="Chain P.S."/>
            <person name="Lang D.M."/>
            <person name="Comerci D.J."/>
            <person name="Malfatti S.A."/>
            <person name="Vergez L.M."/>
            <person name="Shin M."/>
            <person name="Ugalde R.A."/>
            <person name="Garcia E."/>
            <person name="Tolmasky M.E."/>
        </authorList>
    </citation>
    <scope>NUCLEOTIDE SEQUENCE [LARGE SCALE GENOMIC DNA]</scope>
    <source>
        <strain>ATCC 49188 / DSM 6882 / CCUG 24695 / JCM 21032 / LMG 3331 / NBRC 15819 / NCTC 12168 / Alc 37</strain>
    </source>
</reference>
<organism>
    <name type="scientific">Brucella anthropi (strain ATCC 49188 / DSM 6882 / CCUG 24695 / JCM 21032 / LMG 3331 / NBRC 15819 / NCTC 12168 / Alc 37)</name>
    <name type="common">Ochrobactrum anthropi</name>
    <dbReference type="NCBI Taxonomy" id="439375"/>
    <lineage>
        <taxon>Bacteria</taxon>
        <taxon>Pseudomonadati</taxon>
        <taxon>Pseudomonadota</taxon>
        <taxon>Alphaproteobacteria</taxon>
        <taxon>Hyphomicrobiales</taxon>
        <taxon>Brucellaceae</taxon>
        <taxon>Brucella/Ochrobactrum group</taxon>
        <taxon>Brucella</taxon>
    </lineage>
</organism>
<sequence length="694" mass="76498">MAREYKIEDYRNFGIMAHIDAGKTTMTERILFYTGKNHKIGETHDGASTMDWMEQEQERGITITSAATTTFWQGQDGKKRRFNIIDTPGHVDFTIEVERSLRVLDGAIALLDANAGVEPQTETVWRQAEKYHVPRMVFVNKMDKIGADFYRCVEMVGSRLGAVALPVQLPIGAENEFEGVIDLIEMKALTWDGTIGAAATVGEIPEHLKDQAEEYREKLIELAVEIDEAAMEAYLEGTMPTNEQLRALIRKGTIEVKFHPILCGTAFKNRGVQPLLDAVVEFLPAPTDVPAIKGIDVKTETETTRESSDEAPLSMLAFKIMNDPFVGSLTFARIYSGKLTKGVSLENTVKGKRERIGRMLQMHSNSREDIEEAFAGDIVALAGLKETTTGDTLCDPLKPVILERMEFPDPVIEIAIEPKTKADQEKMGIALNRLAAEDPSFRVKSDEESGQTIIAGMGELHLDILVDRMKREFKVEANVGAPQVAYRESITRQAEIDYTHKKQSGGSGQFARVKIIFEPHDGDDFIFESKIVGGSVPKEYIPGVQKGIESVMGAGPLAGFPMLGVKATLIDGAYHDVDSSVLAFEIASRAAFREGAQKAGAQLLEPIMKVEVVTPEDYVGDVIGDLNSRRGQISGTEARGIATVVNANVPLANMFGYVNNLRSMSQGRAQYTMQFDHYEPVPTAVAQEIQKKFA</sequence>
<dbReference type="EMBL" id="CP000758">
    <property type="protein sequence ID" value="ABS14669.1"/>
    <property type="molecule type" value="Genomic_DNA"/>
</dbReference>
<dbReference type="RefSeq" id="WP_010659911.1">
    <property type="nucleotide sequence ID" value="NC_009667.1"/>
</dbReference>
<dbReference type="SMR" id="A6X0B5"/>
<dbReference type="STRING" id="439375.Oant_1953"/>
<dbReference type="GeneID" id="61317589"/>
<dbReference type="KEGG" id="oan:Oant_1953"/>
<dbReference type="eggNOG" id="COG0480">
    <property type="taxonomic scope" value="Bacteria"/>
</dbReference>
<dbReference type="HOGENOM" id="CLU_002794_4_2_5"/>
<dbReference type="PhylomeDB" id="A6X0B5"/>
<dbReference type="Proteomes" id="UP000002301">
    <property type="component" value="Chromosome 1"/>
</dbReference>
<dbReference type="GO" id="GO:0005737">
    <property type="term" value="C:cytoplasm"/>
    <property type="evidence" value="ECO:0007669"/>
    <property type="project" value="UniProtKB-SubCell"/>
</dbReference>
<dbReference type="GO" id="GO:0005525">
    <property type="term" value="F:GTP binding"/>
    <property type="evidence" value="ECO:0007669"/>
    <property type="project" value="UniProtKB-UniRule"/>
</dbReference>
<dbReference type="GO" id="GO:0003924">
    <property type="term" value="F:GTPase activity"/>
    <property type="evidence" value="ECO:0007669"/>
    <property type="project" value="InterPro"/>
</dbReference>
<dbReference type="GO" id="GO:0097216">
    <property type="term" value="F:guanosine tetraphosphate binding"/>
    <property type="evidence" value="ECO:0007669"/>
    <property type="project" value="UniProtKB-ARBA"/>
</dbReference>
<dbReference type="GO" id="GO:0003746">
    <property type="term" value="F:translation elongation factor activity"/>
    <property type="evidence" value="ECO:0007669"/>
    <property type="project" value="UniProtKB-UniRule"/>
</dbReference>
<dbReference type="GO" id="GO:0032790">
    <property type="term" value="P:ribosome disassembly"/>
    <property type="evidence" value="ECO:0007669"/>
    <property type="project" value="TreeGrafter"/>
</dbReference>
<dbReference type="CDD" id="cd01886">
    <property type="entry name" value="EF-G"/>
    <property type="match status" value="1"/>
</dbReference>
<dbReference type="CDD" id="cd16262">
    <property type="entry name" value="EFG_III"/>
    <property type="match status" value="1"/>
</dbReference>
<dbReference type="CDD" id="cd01434">
    <property type="entry name" value="EFG_mtEFG1_IV"/>
    <property type="match status" value="1"/>
</dbReference>
<dbReference type="CDD" id="cd03713">
    <property type="entry name" value="EFG_mtEFG_C"/>
    <property type="match status" value="1"/>
</dbReference>
<dbReference type="CDD" id="cd04088">
    <property type="entry name" value="EFG_mtEFG_II"/>
    <property type="match status" value="1"/>
</dbReference>
<dbReference type="FunFam" id="2.40.30.10:FF:000006">
    <property type="entry name" value="Elongation factor G"/>
    <property type="match status" value="1"/>
</dbReference>
<dbReference type="FunFam" id="3.30.230.10:FF:000003">
    <property type="entry name" value="Elongation factor G"/>
    <property type="match status" value="1"/>
</dbReference>
<dbReference type="FunFam" id="3.30.70.240:FF:000001">
    <property type="entry name" value="Elongation factor G"/>
    <property type="match status" value="1"/>
</dbReference>
<dbReference type="FunFam" id="3.30.70.870:FF:000001">
    <property type="entry name" value="Elongation factor G"/>
    <property type="match status" value="1"/>
</dbReference>
<dbReference type="FunFam" id="3.40.50.300:FF:000029">
    <property type="entry name" value="Elongation factor G"/>
    <property type="match status" value="1"/>
</dbReference>
<dbReference type="Gene3D" id="3.30.230.10">
    <property type="match status" value="1"/>
</dbReference>
<dbReference type="Gene3D" id="3.30.70.240">
    <property type="match status" value="1"/>
</dbReference>
<dbReference type="Gene3D" id="3.30.70.870">
    <property type="entry name" value="Elongation Factor G (Translational Gtpase), domain 3"/>
    <property type="match status" value="1"/>
</dbReference>
<dbReference type="Gene3D" id="3.40.50.300">
    <property type="entry name" value="P-loop containing nucleotide triphosphate hydrolases"/>
    <property type="match status" value="1"/>
</dbReference>
<dbReference type="Gene3D" id="2.40.30.10">
    <property type="entry name" value="Translation factors"/>
    <property type="match status" value="1"/>
</dbReference>
<dbReference type="HAMAP" id="MF_00054_B">
    <property type="entry name" value="EF_G_EF_2_B"/>
    <property type="match status" value="1"/>
</dbReference>
<dbReference type="InterPro" id="IPR041095">
    <property type="entry name" value="EFG_II"/>
</dbReference>
<dbReference type="InterPro" id="IPR009022">
    <property type="entry name" value="EFG_III"/>
</dbReference>
<dbReference type="InterPro" id="IPR035647">
    <property type="entry name" value="EFG_III/V"/>
</dbReference>
<dbReference type="InterPro" id="IPR047872">
    <property type="entry name" value="EFG_IV"/>
</dbReference>
<dbReference type="InterPro" id="IPR035649">
    <property type="entry name" value="EFG_V"/>
</dbReference>
<dbReference type="InterPro" id="IPR000640">
    <property type="entry name" value="EFG_V-like"/>
</dbReference>
<dbReference type="InterPro" id="IPR004161">
    <property type="entry name" value="EFTu-like_2"/>
</dbReference>
<dbReference type="InterPro" id="IPR031157">
    <property type="entry name" value="G_TR_CS"/>
</dbReference>
<dbReference type="InterPro" id="IPR027417">
    <property type="entry name" value="P-loop_NTPase"/>
</dbReference>
<dbReference type="InterPro" id="IPR020568">
    <property type="entry name" value="Ribosomal_Su5_D2-typ_SF"/>
</dbReference>
<dbReference type="InterPro" id="IPR014721">
    <property type="entry name" value="Ribsml_uS5_D2-typ_fold_subgr"/>
</dbReference>
<dbReference type="InterPro" id="IPR005225">
    <property type="entry name" value="Small_GTP-bd"/>
</dbReference>
<dbReference type="InterPro" id="IPR000795">
    <property type="entry name" value="T_Tr_GTP-bd_dom"/>
</dbReference>
<dbReference type="InterPro" id="IPR009000">
    <property type="entry name" value="Transl_B-barrel_sf"/>
</dbReference>
<dbReference type="InterPro" id="IPR004540">
    <property type="entry name" value="Transl_elong_EFG/EF2"/>
</dbReference>
<dbReference type="InterPro" id="IPR005517">
    <property type="entry name" value="Transl_elong_EFG/EF2_IV"/>
</dbReference>
<dbReference type="NCBIfam" id="TIGR00484">
    <property type="entry name" value="EF-G"/>
    <property type="match status" value="1"/>
</dbReference>
<dbReference type="NCBIfam" id="NF009381">
    <property type="entry name" value="PRK12740.1-5"/>
    <property type="match status" value="1"/>
</dbReference>
<dbReference type="NCBIfam" id="TIGR00231">
    <property type="entry name" value="small_GTP"/>
    <property type="match status" value="1"/>
</dbReference>
<dbReference type="PANTHER" id="PTHR43261:SF1">
    <property type="entry name" value="RIBOSOME-RELEASING FACTOR 2, MITOCHONDRIAL"/>
    <property type="match status" value="1"/>
</dbReference>
<dbReference type="PANTHER" id="PTHR43261">
    <property type="entry name" value="TRANSLATION ELONGATION FACTOR G-RELATED"/>
    <property type="match status" value="1"/>
</dbReference>
<dbReference type="Pfam" id="PF00679">
    <property type="entry name" value="EFG_C"/>
    <property type="match status" value="1"/>
</dbReference>
<dbReference type="Pfam" id="PF14492">
    <property type="entry name" value="EFG_III"/>
    <property type="match status" value="1"/>
</dbReference>
<dbReference type="Pfam" id="PF03764">
    <property type="entry name" value="EFG_IV"/>
    <property type="match status" value="1"/>
</dbReference>
<dbReference type="Pfam" id="PF00009">
    <property type="entry name" value="GTP_EFTU"/>
    <property type="match status" value="1"/>
</dbReference>
<dbReference type="Pfam" id="PF03144">
    <property type="entry name" value="GTP_EFTU_D2"/>
    <property type="match status" value="1"/>
</dbReference>
<dbReference type="PRINTS" id="PR00315">
    <property type="entry name" value="ELONGATNFCT"/>
</dbReference>
<dbReference type="SMART" id="SM00838">
    <property type="entry name" value="EFG_C"/>
    <property type="match status" value="1"/>
</dbReference>
<dbReference type="SMART" id="SM00889">
    <property type="entry name" value="EFG_IV"/>
    <property type="match status" value="1"/>
</dbReference>
<dbReference type="SUPFAM" id="SSF54980">
    <property type="entry name" value="EF-G C-terminal domain-like"/>
    <property type="match status" value="2"/>
</dbReference>
<dbReference type="SUPFAM" id="SSF52540">
    <property type="entry name" value="P-loop containing nucleoside triphosphate hydrolases"/>
    <property type="match status" value="1"/>
</dbReference>
<dbReference type="SUPFAM" id="SSF54211">
    <property type="entry name" value="Ribosomal protein S5 domain 2-like"/>
    <property type="match status" value="1"/>
</dbReference>
<dbReference type="SUPFAM" id="SSF50447">
    <property type="entry name" value="Translation proteins"/>
    <property type="match status" value="1"/>
</dbReference>
<dbReference type="PROSITE" id="PS00301">
    <property type="entry name" value="G_TR_1"/>
    <property type="match status" value="1"/>
</dbReference>
<dbReference type="PROSITE" id="PS51722">
    <property type="entry name" value="G_TR_2"/>
    <property type="match status" value="1"/>
</dbReference>
<keyword id="KW-0963">Cytoplasm</keyword>
<keyword id="KW-0251">Elongation factor</keyword>
<keyword id="KW-0342">GTP-binding</keyword>
<keyword id="KW-0547">Nucleotide-binding</keyword>
<keyword id="KW-0648">Protein biosynthesis</keyword>
<keyword id="KW-1185">Reference proteome</keyword>
<comment type="function">
    <text evidence="1">Catalyzes the GTP-dependent ribosomal translocation step during translation elongation. During this step, the ribosome changes from the pre-translocational (PRE) to the post-translocational (POST) state as the newly formed A-site-bound peptidyl-tRNA and P-site-bound deacylated tRNA move to the P and E sites, respectively. Catalyzes the coordinated movement of the two tRNA molecules, the mRNA and conformational changes in the ribosome.</text>
</comment>
<comment type="subcellular location">
    <subcellularLocation>
        <location evidence="1">Cytoplasm</location>
    </subcellularLocation>
</comment>
<comment type="similarity">
    <text evidence="1">Belongs to the TRAFAC class translation factor GTPase superfamily. Classic translation factor GTPase family. EF-G/EF-2 subfamily.</text>
</comment>
<accession>A6X0B5</accession>
<name>EFG_BRUA4</name>
<feature type="chain" id="PRO_1000008861" description="Elongation factor G">
    <location>
        <begin position="1"/>
        <end position="694"/>
    </location>
</feature>
<feature type="domain" description="tr-type G">
    <location>
        <begin position="8"/>
        <end position="287"/>
    </location>
</feature>
<feature type="binding site" evidence="1">
    <location>
        <begin position="17"/>
        <end position="24"/>
    </location>
    <ligand>
        <name>GTP</name>
        <dbReference type="ChEBI" id="CHEBI:37565"/>
    </ligand>
</feature>
<feature type="binding site" evidence="1">
    <location>
        <begin position="86"/>
        <end position="90"/>
    </location>
    <ligand>
        <name>GTP</name>
        <dbReference type="ChEBI" id="CHEBI:37565"/>
    </ligand>
</feature>
<feature type="binding site" evidence="1">
    <location>
        <begin position="140"/>
        <end position="143"/>
    </location>
    <ligand>
        <name>GTP</name>
        <dbReference type="ChEBI" id="CHEBI:37565"/>
    </ligand>
</feature>